<name>NU4M_LACMU</name>
<gene>
    <name type="primary">MT-ND4</name>
    <name type="synonym">MTND4</name>
    <name type="synonym">NADH4</name>
    <name type="synonym">ND4</name>
</gene>
<keyword id="KW-0249">Electron transport</keyword>
<keyword id="KW-0472">Membrane</keyword>
<keyword id="KW-0496">Mitochondrion</keyword>
<keyword id="KW-0520">NAD</keyword>
<keyword id="KW-0679">Respiratory chain</keyword>
<keyword id="KW-1278">Translocase</keyword>
<keyword id="KW-0812">Transmembrane</keyword>
<keyword id="KW-1133">Transmembrane helix</keyword>
<keyword id="KW-0813">Transport</keyword>
<keyword id="KW-0830">Ubiquinone</keyword>
<accession>P92649</accession>
<evidence type="ECO:0000250" key="1"/>
<evidence type="ECO:0000255" key="2"/>
<evidence type="ECO:0000305" key="3"/>
<protein>
    <recommendedName>
        <fullName>NADH-ubiquinone oxidoreductase chain 4</fullName>
        <ecNumber>7.1.1.2</ecNumber>
    </recommendedName>
    <alternativeName>
        <fullName>NADH dehydrogenase subunit 4</fullName>
    </alternativeName>
</protein>
<organism>
    <name type="scientific">Lachesis muta muta</name>
    <name type="common">Bushmaster</name>
    <dbReference type="NCBI Taxonomy" id="8753"/>
    <lineage>
        <taxon>Eukaryota</taxon>
        <taxon>Metazoa</taxon>
        <taxon>Chordata</taxon>
        <taxon>Craniata</taxon>
        <taxon>Vertebrata</taxon>
        <taxon>Euteleostomi</taxon>
        <taxon>Lepidosauria</taxon>
        <taxon>Squamata</taxon>
        <taxon>Bifurcata</taxon>
        <taxon>Unidentata</taxon>
        <taxon>Episquamata</taxon>
        <taxon>Toxicofera</taxon>
        <taxon>Serpentes</taxon>
        <taxon>Colubroidea</taxon>
        <taxon>Viperidae</taxon>
        <taxon>Crotalinae</taxon>
        <taxon>Lachesis</taxon>
    </lineage>
</organism>
<comment type="function">
    <text evidence="1">Core subunit of the mitochondrial membrane respiratory chain NADH dehydrogenase (Complex I) that is believed to belong to the minimal assembly required for catalysis. Complex I functions in the transfer of electrons from NADH to the respiratory chain. The immediate electron acceptor for the enzyme is believed to be ubiquinone (By similarity).</text>
</comment>
<comment type="catalytic activity">
    <reaction>
        <text>a ubiquinone + NADH + 5 H(+)(in) = a ubiquinol + NAD(+) + 4 H(+)(out)</text>
        <dbReference type="Rhea" id="RHEA:29091"/>
        <dbReference type="Rhea" id="RHEA-COMP:9565"/>
        <dbReference type="Rhea" id="RHEA-COMP:9566"/>
        <dbReference type="ChEBI" id="CHEBI:15378"/>
        <dbReference type="ChEBI" id="CHEBI:16389"/>
        <dbReference type="ChEBI" id="CHEBI:17976"/>
        <dbReference type="ChEBI" id="CHEBI:57540"/>
        <dbReference type="ChEBI" id="CHEBI:57945"/>
        <dbReference type="EC" id="7.1.1.2"/>
    </reaction>
</comment>
<comment type="subcellular location">
    <subcellularLocation>
        <location evidence="1">Mitochondrion membrane</location>
        <topology evidence="1">Multi-pass membrane protein</topology>
    </subcellularLocation>
</comment>
<comment type="similarity">
    <text evidence="3">Belongs to the complex I subunit 4 family.</text>
</comment>
<sequence>PIAGSMVLAAILLKLGGYGIIRMMQTLPTTKTDMFIPFIVLALWGAILANLTCLQQTDLKSLIAYSSISHMGLVVATIIIQTPWGLSGAMALMIAHGFTSSALFCLANTTYERTHTRILILTRGFHNILPMTTTWWLLANLMNIAMPPTLNFTGELLIMSTLFNWCPTTIIMLGLSMLITASYSLHMFLSTQMGPTPLNSQTEPTHSREHLLMTLHLFPLMLISLKPELVI</sequence>
<reference key="1">
    <citation type="journal article" date="1996" name="Copeia">
        <title>Crotaline intergeneric relationships based on mitochondrial DNA sequence data.</title>
        <authorList>
            <person name="Kraus F."/>
            <person name="Mink D.G."/>
            <person name="Brown W.M."/>
        </authorList>
    </citation>
    <scope>NUCLEOTIDE SEQUENCE [GENOMIC DNA]</scope>
</reference>
<proteinExistence type="inferred from homology"/>
<geneLocation type="mitochondrion"/>
<dbReference type="EC" id="7.1.1.2"/>
<dbReference type="EMBL" id="U41885">
    <property type="protein sequence ID" value="AAB46645.1"/>
    <property type="molecule type" value="Genomic_DNA"/>
</dbReference>
<dbReference type="SMR" id="P92649"/>
<dbReference type="GO" id="GO:0031966">
    <property type="term" value="C:mitochondrial membrane"/>
    <property type="evidence" value="ECO:0007669"/>
    <property type="project" value="UniProtKB-SubCell"/>
</dbReference>
<dbReference type="GO" id="GO:0008137">
    <property type="term" value="F:NADH dehydrogenase (ubiquinone) activity"/>
    <property type="evidence" value="ECO:0007669"/>
    <property type="project" value="UniProtKB-EC"/>
</dbReference>
<dbReference type="GO" id="GO:0048039">
    <property type="term" value="F:ubiquinone binding"/>
    <property type="evidence" value="ECO:0007669"/>
    <property type="project" value="TreeGrafter"/>
</dbReference>
<dbReference type="GO" id="GO:0042773">
    <property type="term" value="P:ATP synthesis coupled electron transport"/>
    <property type="evidence" value="ECO:0007669"/>
    <property type="project" value="InterPro"/>
</dbReference>
<dbReference type="GO" id="GO:0015990">
    <property type="term" value="P:electron transport coupled proton transport"/>
    <property type="evidence" value="ECO:0007669"/>
    <property type="project" value="TreeGrafter"/>
</dbReference>
<dbReference type="InterPro" id="IPR003918">
    <property type="entry name" value="NADH_UbQ_OxRdtase"/>
</dbReference>
<dbReference type="InterPro" id="IPR001750">
    <property type="entry name" value="ND/Mrp_TM"/>
</dbReference>
<dbReference type="PANTHER" id="PTHR43507">
    <property type="entry name" value="NADH-UBIQUINONE OXIDOREDUCTASE CHAIN 4"/>
    <property type="match status" value="1"/>
</dbReference>
<dbReference type="PANTHER" id="PTHR43507:SF20">
    <property type="entry name" value="NADH-UBIQUINONE OXIDOREDUCTASE CHAIN 4"/>
    <property type="match status" value="1"/>
</dbReference>
<dbReference type="Pfam" id="PF00361">
    <property type="entry name" value="Proton_antipo_M"/>
    <property type="match status" value="1"/>
</dbReference>
<feature type="chain" id="PRO_0000117945" description="NADH-ubiquinone oxidoreductase chain 4">
    <location>
        <begin position="1" status="less than"/>
        <end position="231" status="greater than"/>
    </location>
</feature>
<feature type="transmembrane region" description="Helical" evidence="2">
    <location>
        <begin position="1"/>
        <end position="21"/>
    </location>
</feature>
<feature type="transmembrane region" description="Helical" evidence="2">
    <location>
        <begin position="34"/>
        <end position="54"/>
    </location>
</feature>
<feature type="transmembrane region" description="Helical" evidence="2">
    <location>
        <begin position="63"/>
        <end position="85"/>
    </location>
</feature>
<feature type="transmembrane region" description="Helical" evidence="2">
    <location>
        <begin position="89"/>
        <end position="111"/>
    </location>
</feature>
<feature type="transmembrane region" description="Helical" evidence="2">
    <location>
        <begin position="128"/>
        <end position="148"/>
    </location>
</feature>
<feature type="transmembrane region" description="Helical" evidence="2">
    <location>
        <begin position="169"/>
        <end position="189"/>
    </location>
</feature>
<feature type="non-terminal residue">
    <location>
        <position position="1"/>
    </location>
</feature>
<feature type="non-terminal residue">
    <location>
        <position position="231"/>
    </location>
</feature>